<name>PCC1_EREGS</name>
<accession>Q753M3</accession>
<protein>
    <recommendedName>
        <fullName>EKC/KEOPS complex subunit PCC1</fullName>
    </recommendedName>
</protein>
<comment type="function">
    <text evidence="1">Component of the EKC/KEOPS complex that is required for the formation of a threonylcarbamoyl group on adenosine at position 37 (t(6)A37) in tRNAs that read codons beginning with adenine. The complex is probably involved in the transfer of the threonylcarbamoyl moiety of threonylcarbamoyl-AMP (TC-AMP) to the N6 group of A37. PCC1 functions as a dimerization module for the complex. The EKC/KEOPS complex also promotes both telomere uncapping and telomere elongation. The complex is required for efficient recruitment of transcriptional coactivators (By similarity).</text>
</comment>
<comment type="subunit">
    <text evidence="1">Component of the EKC/KEOPS complex composed of at least BUD32, CGI121, GON7, KAE1 and PCC1; the whole complex dimerizes.</text>
</comment>
<comment type="subcellular location">
    <subcellularLocation>
        <location evidence="1">Nucleus</location>
    </subcellularLocation>
    <subcellularLocation>
        <location evidence="1">Chromosome</location>
        <location evidence="1">Telomere</location>
    </subcellularLocation>
</comment>
<comment type="similarity">
    <text evidence="2">Belongs to the CTAG/PCC1 family.</text>
</comment>
<evidence type="ECO:0000250" key="1"/>
<evidence type="ECO:0000305" key="2"/>
<dbReference type="EMBL" id="AE016819">
    <property type="protein sequence ID" value="AAS53660.1"/>
    <property type="molecule type" value="Genomic_DNA"/>
</dbReference>
<dbReference type="RefSeq" id="NP_985836.1">
    <property type="nucleotide sequence ID" value="NM_211191.1"/>
</dbReference>
<dbReference type="SMR" id="Q753M3"/>
<dbReference type="FunCoup" id="Q753M3">
    <property type="interactions" value="68"/>
</dbReference>
<dbReference type="STRING" id="284811.Q753M3"/>
<dbReference type="EnsemblFungi" id="AAS53660">
    <property type="protein sequence ID" value="AAS53660"/>
    <property type="gene ID" value="AGOS_AFR289W"/>
</dbReference>
<dbReference type="GeneID" id="4622099"/>
<dbReference type="KEGG" id="ago:AGOS_AFR289W"/>
<dbReference type="eggNOG" id="ENOG502S7CS">
    <property type="taxonomic scope" value="Eukaryota"/>
</dbReference>
<dbReference type="HOGENOM" id="CLU_113770_5_0_1"/>
<dbReference type="InParanoid" id="Q753M3"/>
<dbReference type="OrthoDB" id="10025739at2759"/>
<dbReference type="Proteomes" id="UP000000591">
    <property type="component" value="Chromosome VI"/>
</dbReference>
<dbReference type="GO" id="GO:0000781">
    <property type="term" value="C:chromosome, telomeric region"/>
    <property type="evidence" value="ECO:0007669"/>
    <property type="project" value="UniProtKB-SubCell"/>
</dbReference>
<dbReference type="GO" id="GO:0000408">
    <property type="term" value="C:EKC/KEOPS complex"/>
    <property type="evidence" value="ECO:0000318"/>
    <property type="project" value="GO_Central"/>
</dbReference>
<dbReference type="GO" id="GO:0005634">
    <property type="term" value="C:nucleus"/>
    <property type="evidence" value="ECO:0007669"/>
    <property type="project" value="UniProtKB-SubCell"/>
</dbReference>
<dbReference type="GO" id="GO:0008033">
    <property type="term" value="P:tRNA processing"/>
    <property type="evidence" value="ECO:0007669"/>
    <property type="project" value="UniProtKB-KW"/>
</dbReference>
<dbReference type="GO" id="GO:0070525">
    <property type="term" value="P:tRNA threonylcarbamoyladenosine metabolic process"/>
    <property type="evidence" value="ECO:0000318"/>
    <property type="project" value="GO_Central"/>
</dbReference>
<dbReference type="Gene3D" id="3.30.310.50">
    <property type="entry name" value="Alpha-D-phosphohexomutase, C-terminal domain"/>
    <property type="match status" value="1"/>
</dbReference>
<dbReference type="InterPro" id="IPR015419">
    <property type="entry name" value="CTAG/Pcc1"/>
</dbReference>
<dbReference type="PANTHER" id="PTHR31283">
    <property type="entry name" value="EKC/KEOPS COMPLEX SUBUNIT PCC1 FAMILY MEMBER"/>
    <property type="match status" value="1"/>
</dbReference>
<dbReference type="PANTHER" id="PTHR31283:SF5">
    <property type="entry name" value="EKC_KEOPS COMPLEX SUBUNIT LAGE3"/>
    <property type="match status" value="1"/>
</dbReference>
<dbReference type="Pfam" id="PF09341">
    <property type="entry name" value="Pcc1"/>
    <property type="match status" value="1"/>
</dbReference>
<reference key="1">
    <citation type="journal article" date="2004" name="Science">
        <title>The Ashbya gossypii genome as a tool for mapping the ancient Saccharomyces cerevisiae genome.</title>
        <authorList>
            <person name="Dietrich F.S."/>
            <person name="Voegeli S."/>
            <person name="Brachat S."/>
            <person name="Lerch A."/>
            <person name="Gates K."/>
            <person name="Steiner S."/>
            <person name="Mohr C."/>
            <person name="Poehlmann R."/>
            <person name="Luedi P."/>
            <person name="Choi S."/>
            <person name="Wing R.A."/>
            <person name="Flavier A."/>
            <person name="Gaffney T.D."/>
            <person name="Philippsen P."/>
        </authorList>
    </citation>
    <scope>NUCLEOTIDE SEQUENCE [LARGE SCALE GENOMIC DNA]</scope>
    <source>
        <strain>ATCC 10895 / CBS 109.51 / FGSC 9923 / NRRL Y-1056</strain>
    </source>
</reference>
<reference key="2">
    <citation type="journal article" date="2013" name="G3 (Bethesda)">
        <title>Genomes of Ashbya fungi isolated from insects reveal four mating-type loci, numerous translocations, lack of transposons, and distinct gene duplications.</title>
        <authorList>
            <person name="Dietrich F.S."/>
            <person name="Voegeli S."/>
            <person name="Kuo S."/>
            <person name="Philippsen P."/>
        </authorList>
    </citation>
    <scope>GENOME REANNOTATION</scope>
    <source>
        <strain>ATCC 10895 / CBS 109.51 / FGSC 9923 / NRRL Y-1056</strain>
    </source>
</reference>
<gene>
    <name type="primary">PCC1</name>
    <name type="ordered locus">AFR289W</name>
</gene>
<feature type="chain" id="PRO_0000278942" description="EKC/KEOPS complex subunit PCC1">
    <location>
        <begin position="1"/>
        <end position="81"/>
    </location>
</feature>
<keyword id="KW-0010">Activator</keyword>
<keyword id="KW-0158">Chromosome</keyword>
<keyword id="KW-0539">Nucleus</keyword>
<keyword id="KW-1185">Reference proteome</keyword>
<keyword id="KW-0779">Telomere</keyword>
<keyword id="KW-0804">Transcription</keyword>
<keyword id="KW-0805">Transcription regulation</keyword>
<keyword id="KW-0819">tRNA processing</keyword>
<sequence length="81" mass="8768">MDHTLHLHVPFESARLADIAARALAPDPLLRPEELSVSFASDGASLNIKLAAIDARVLRVATNSIFEALKTVVETADELDF</sequence>
<organism>
    <name type="scientific">Eremothecium gossypii (strain ATCC 10895 / CBS 109.51 / FGSC 9923 / NRRL Y-1056)</name>
    <name type="common">Yeast</name>
    <name type="synonym">Ashbya gossypii</name>
    <dbReference type="NCBI Taxonomy" id="284811"/>
    <lineage>
        <taxon>Eukaryota</taxon>
        <taxon>Fungi</taxon>
        <taxon>Dikarya</taxon>
        <taxon>Ascomycota</taxon>
        <taxon>Saccharomycotina</taxon>
        <taxon>Saccharomycetes</taxon>
        <taxon>Saccharomycetales</taxon>
        <taxon>Saccharomycetaceae</taxon>
        <taxon>Eremothecium</taxon>
    </lineage>
</organism>
<proteinExistence type="inferred from homology"/>